<gene>
    <name evidence="1" type="primary">gmhA</name>
    <name type="ordered locus">SSPA2283</name>
</gene>
<accession>B5BDQ9</accession>
<dbReference type="EC" id="5.3.1.28" evidence="1"/>
<dbReference type="EMBL" id="FM200053">
    <property type="protein sequence ID" value="CAR60506.1"/>
    <property type="molecule type" value="Genomic_DNA"/>
</dbReference>
<dbReference type="SMR" id="B5BDQ9"/>
<dbReference type="KEGG" id="sek:SSPA2283"/>
<dbReference type="HOGENOM" id="CLU_080999_4_0_6"/>
<dbReference type="UniPathway" id="UPA00041">
    <property type="reaction ID" value="UER00436"/>
</dbReference>
<dbReference type="Proteomes" id="UP000001869">
    <property type="component" value="Chromosome"/>
</dbReference>
<dbReference type="GO" id="GO:0005737">
    <property type="term" value="C:cytoplasm"/>
    <property type="evidence" value="ECO:0007669"/>
    <property type="project" value="UniProtKB-SubCell"/>
</dbReference>
<dbReference type="GO" id="GO:0097367">
    <property type="term" value="F:carbohydrate derivative binding"/>
    <property type="evidence" value="ECO:0007669"/>
    <property type="project" value="InterPro"/>
</dbReference>
<dbReference type="GO" id="GO:0008968">
    <property type="term" value="F:D-sedoheptulose 7-phosphate isomerase activity"/>
    <property type="evidence" value="ECO:0007669"/>
    <property type="project" value="UniProtKB-UniRule"/>
</dbReference>
<dbReference type="GO" id="GO:0008270">
    <property type="term" value="F:zinc ion binding"/>
    <property type="evidence" value="ECO:0007669"/>
    <property type="project" value="UniProtKB-UniRule"/>
</dbReference>
<dbReference type="GO" id="GO:0005975">
    <property type="term" value="P:carbohydrate metabolic process"/>
    <property type="evidence" value="ECO:0007669"/>
    <property type="project" value="UniProtKB-UniRule"/>
</dbReference>
<dbReference type="GO" id="GO:2001061">
    <property type="term" value="P:D-glycero-D-manno-heptose 7-phosphate biosynthetic process"/>
    <property type="evidence" value="ECO:0007669"/>
    <property type="project" value="UniProtKB-UniPathway"/>
</dbReference>
<dbReference type="CDD" id="cd05006">
    <property type="entry name" value="SIS_GmhA"/>
    <property type="match status" value="1"/>
</dbReference>
<dbReference type="FunFam" id="3.40.50.10490:FF:000013">
    <property type="entry name" value="Phosphoheptose isomerase"/>
    <property type="match status" value="1"/>
</dbReference>
<dbReference type="Gene3D" id="3.40.50.10490">
    <property type="entry name" value="Glucose-6-phosphate isomerase like protein, domain 1"/>
    <property type="match status" value="1"/>
</dbReference>
<dbReference type="HAMAP" id="MF_00067">
    <property type="entry name" value="GmhA"/>
    <property type="match status" value="1"/>
</dbReference>
<dbReference type="InterPro" id="IPR035461">
    <property type="entry name" value="GmhA/DiaA"/>
</dbReference>
<dbReference type="InterPro" id="IPR004515">
    <property type="entry name" value="Phosphoheptose_Isoase"/>
</dbReference>
<dbReference type="InterPro" id="IPR001347">
    <property type="entry name" value="SIS_dom"/>
</dbReference>
<dbReference type="InterPro" id="IPR046348">
    <property type="entry name" value="SIS_dom_sf"/>
</dbReference>
<dbReference type="InterPro" id="IPR050099">
    <property type="entry name" value="SIS_GmhA/DiaA_subfam"/>
</dbReference>
<dbReference type="NCBIfam" id="TIGR00441">
    <property type="entry name" value="gmhA"/>
    <property type="match status" value="1"/>
</dbReference>
<dbReference type="NCBIfam" id="NF001628">
    <property type="entry name" value="PRK00414.1"/>
    <property type="match status" value="1"/>
</dbReference>
<dbReference type="PANTHER" id="PTHR30390:SF7">
    <property type="entry name" value="PHOSPHOHEPTOSE ISOMERASE"/>
    <property type="match status" value="1"/>
</dbReference>
<dbReference type="PANTHER" id="PTHR30390">
    <property type="entry name" value="SEDOHEPTULOSE 7-PHOSPHATE ISOMERASE / DNAA INITIATOR-ASSOCIATING FACTOR FOR REPLICATION INITIATION"/>
    <property type="match status" value="1"/>
</dbReference>
<dbReference type="Pfam" id="PF13580">
    <property type="entry name" value="SIS_2"/>
    <property type="match status" value="1"/>
</dbReference>
<dbReference type="SUPFAM" id="SSF53697">
    <property type="entry name" value="SIS domain"/>
    <property type="match status" value="1"/>
</dbReference>
<dbReference type="PROSITE" id="PS51464">
    <property type="entry name" value="SIS"/>
    <property type="match status" value="1"/>
</dbReference>
<feature type="chain" id="PRO_1000092292" description="Phosphoheptose isomerase">
    <location>
        <begin position="1"/>
        <end position="192"/>
    </location>
</feature>
<feature type="domain" description="SIS" evidence="1">
    <location>
        <begin position="37"/>
        <end position="192"/>
    </location>
</feature>
<feature type="binding site" evidence="1">
    <location>
        <begin position="52"/>
        <end position="54"/>
    </location>
    <ligand>
        <name>substrate</name>
    </ligand>
</feature>
<feature type="binding site" evidence="1">
    <location>
        <position position="61"/>
    </location>
    <ligand>
        <name>Zn(2+)</name>
        <dbReference type="ChEBI" id="CHEBI:29105"/>
    </ligand>
</feature>
<feature type="binding site" evidence="1">
    <location>
        <position position="65"/>
    </location>
    <ligand>
        <name>substrate</name>
    </ligand>
</feature>
<feature type="binding site" evidence="1">
    <location>
        <position position="65"/>
    </location>
    <ligand>
        <name>Zn(2+)</name>
        <dbReference type="ChEBI" id="CHEBI:29105"/>
    </ligand>
</feature>
<feature type="binding site" evidence="1">
    <location>
        <begin position="93"/>
        <end position="94"/>
    </location>
    <ligand>
        <name>substrate</name>
    </ligand>
</feature>
<feature type="binding site" evidence="1">
    <location>
        <begin position="119"/>
        <end position="121"/>
    </location>
    <ligand>
        <name>substrate</name>
    </ligand>
</feature>
<feature type="binding site" evidence="1">
    <location>
        <position position="124"/>
    </location>
    <ligand>
        <name>substrate</name>
    </ligand>
</feature>
<feature type="binding site" evidence="1">
    <location>
        <position position="172"/>
    </location>
    <ligand>
        <name>substrate</name>
    </ligand>
</feature>
<feature type="binding site" evidence="1">
    <location>
        <position position="172"/>
    </location>
    <ligand>
        <name>Zn(2+)</name>
        <dbReference type="ChEBI" id="CHEBI:29105"/>
    </ligand>
</feature>
<feature type="binding site" evidence="1">
    <location>
        <position position="180"/>
    </location>
    <ligand>
        <name>Zn(2+)</name>
        <dbReference type="ChEBI" id="CHEBI:29105"/>
    </ligand>
</feature>
<sequence>MYQDLIRNELNEAAETLANFLKDDANIHAIQRAAVLLADSFKAGGKVLSCGNGGSHCDAMHFAEELTGRYRENRPGYPAIAISDVSHISCVSNDFGYDYIFSRYVEAVGREGDVLLGISTSGNSGNVIKAIAAAREKGMKVITLTGKDGGKMAGTADIEIRVPHFGYADRIQEIHIKVIHILIQLIEKEMVK</sequence>
<reference key="1">
    <citation type="journal article" date="2009" name="BMC Genomics">
        <title>Pseudogene accumulation in the evolutionary histories of Salmonella enterica serovars Paratyphi A and Typhi.</title>
        <authorList>
            <person name="Holt K.E."/>
            <person name="Thomson N.R."/>
            <person name="Wain J."/>
            <person name="Langridge G.C."/>
            <person name="Hasan R."/>
            <person name="Bhutta Z.A."/>
            <person name="Quail M.A."/>
            <person name="Norbertczak H."/>
            <person name="Walker D."/>
            <person name="Simmonds M."/>
            <person name="White B."/>
            <person name="Bason N."/>
            <person name="Mungall K."/>
            <person name="Dougan G."/>
            <person name="Parkhill J."/>
        </authorList>
    </citation>
    <scope>NUCLEOTIDE SEQUENCE [LARGE SCALE GENOMIC DNA]</scope>
    <source>
        <strain>AKU_12601</strain>
    </source>
</reference>
<proteinExistence type="inferred from homology"/>
<protein>
    <recommendedName>
        <fullName evidence="1">Phosphoheptose isomerase</fullName>
        <ecNumber evidence="1">5.3.1.28</ecNumber>
    </recommendedName>
    <alternativeName>
        <fullName evidence="1">Sedoheptulose 7-phosphate isomerase</fullName>
    </alternativeName>
</protein>
<comment type="function">
    <text evidence="1">Catalyzes the isomerization of sedoheptulose 7-phosphate in D-glycero-D-manno-heptose 7-phosphate.</text>
</comment>
<comment type="catalytic activity">
    <reaction evidence="1">
        <text>2 D-sedoheptulose 7-phosphate = D-glycero-alpha-D-manno-heptose 7-phosphate + D-glycero-beta-D-manno-heptose 7-phosphate</text>
        <dbReference type="Rhea" id="RHEA:27489"/>
        <dbReference type="ChEBI" id="CHEBI:57483"/>
        <dbReference type="ChEBI" id="CHEBI:60203"/>
        <dbReference type="ChEBI" id="CHEBI:60204"/>
        <dbReference type="EC" id="5.3.1.28"/>
    </reaction>
</comment>
<comment type="cofactor">
    <cofactor evidence="1">
        <name>Zn(2+)</name>
        <dbReference type="ChEBI" id="CHEBI:29105"/>
    </cofactor>
    <text evidence="1">Binds 1 zinc ion per subunit.</text>
</comment>
<comment type="pathway">
    <text evidence="1">Carbohydrate biosynthesis; D-glycero-D-manno-heptose 7-phosphate biosynthesis; D-glycero-alpha-D-manno-heptose 7-phosphate and D-glycero-beta-D-manno-heptose 7-phosphate from sedoheptulose 7-phosphate: step 1/1.</text>
</comment>
<comment type="subunit">
    <text evidence="1">Homotetramer.</text>
</comment>
<comment type="subcellular location">
    <subcellularLocation>
        <location evidence="1">Cytoplasm</location>
    </subcellularLocation>
</comment>
<comment type="miscellaneous">
    <text evidence="1">The reaction produces a racemic mixture of D-glycero-alpha-D-manno-heptose 7-phosphate and D-glycero-beta-D-manno-heptose 7-phosphate.</text>
</comment>
<comment type="similarity">
    <text evidence="1">Belongs to the SIS family. GmhA subfamily.</text>
</comment>
<keyword id="KW-0119">Carbohydrate metabolism</keyword>
<keyword id="KW-0963">Cytoplasm</keyword>
<keyword id="KW-0413">Isomerase</keyword>
<keyword id="KW-0479">Metal-binding</keyword>
<keyword id="KW-0862">Zinc</keyword>
<organism>
    <name type="scientific">Salmonella paratyphi A (strain AKU_12601)</name>
    <dbReference type="NCBI Taxonomy" id="554290"/>
    <lineage>
        <taxon>Bacteria</taxon>
        <taxon>Pseudomonadati</taxon>
        <taxon>Pseudomonadota</taxon>
        <taxon>Gammaproteobacteria</taxon>
        <taxon>Enterobacterales</taxon>
        <taxon>Enterobacteriaceae</taxon>
        <taxon>Salmonella</taxon>
    </lineage>
</organism>
<evidence type="ECO:0000255" key="1">
    <source>
        <dbReference type="HAMAP-Rule" id="MF_00067"/>
    </source>
</evidence>
<name>GMHA_SALPK</name>